<evidence type="ECO:0000255" key="1">
    <source>
        <dbReference type="HAMAP-Rule" id="MF_00605"/>
    </source>
</evidence>
<evidence type="ECO:0000256" key="2">
    <source>
        <dbReference type="SAM" id="MobiDB-lite"/>
    </source>
</evidence>
<organism>
    <name type="scientific">Rhizorhabdus wittichii (strain DSM 6014 / CCUG 31198 / JCM 15750 / NBRC 105917 / EY 4224 / RW1)</name>
    <name type="common">Sphingomonas wittichii</name>
    <dbReference type="NCBI Taxonomy" id="392499"/>
    <lineage>
        <taxon>Bacteria</taxon>
        <taxon>Pseudomonadati</taxon>
        <taxon>Pseudomonadota</taxon>
        <taxon>Alphaproteobacteria</taxon>
        <taxon>Sphingomonadales</taxon>
        <taxon>Sphingomonadaceae</taxon>
        <taxon>Rhizorhabdus</taxon>
    </lineage>
</organism>
<name>TRMD_RHIWR</name>
<proteinExistence type="inferred from homology"/>
<feature type="chain" id="PRO_1000006524" description="tRNA (guanine-N(1)-)-methyltransferase">
    <location>
        <begin position="1"/>
        <end position="246"/>
    </location>
</feature>
<feature type="region of interest" description="Disordered" evidence="2">
    <location>
        <begin position="219"/>
        <end position="246"/>
    </location>
</feature>
<feature type="compositionally biased region" description="Basic and acidic residues" evidence="2">
    <location>
        <begin position="219"/>
        <end position="231"/>
    </location>
</feature>
<feature type="binding site" evidence="1">
    <location>
        <position position="114"/>
    </location>
    <ligand>
        <name>S-adenosyl-L-methionine</name>
        <dbReference type="ChEBI" id="CHEBI:59789"/>
    </ligand>
</feature>
<feature type="binding site" evidence="1">
    <location>
        <begin position="134"/>
        <end position="139"/>
    </location>
    <ligand>
        <name>S-adenosyl-L-methionine</name>
        <dbReference type="ChEBI" id="CHEBI:59789"/>
    </ligand>
</feature>
<sequence length="246" mass="26852">MTFAATILTLYPEMFPGPLGVSLAGRALAEGKWSCDPVQIRDFATDRHRSVDDTPAGGGAGMVMRADVLARAVDHALETRPDSPLLAMTPRGAPLTQARVRQLAAGPGVTILCGRFEGIDERLFEARPIEPVSIGDYILSGGEMGALVLLDACIRLLPGVMGAPDSGDEESFESGLLEYPHYTRPAEWEGRTIPEVLRSGDHARIEAWRNAMAETDTRLRRPDLWERHEGARAQSPSGARRQKKER</sequence>
<comment type="function">
    <text evidence="1">Specifically methylates guanosine-37 in various tRNAs.</text>
</comment>
<comment type="catalytic activity">
    <reaction evidence="1">
        <text>guanosine(37) in tRNA + S-adenosyl-L-methionine = N(1)-methylguanosine(37) in tRNA + S-adenosyl-L-homocysteine + H(+)</text>
        <dbReference type="Rhea" id="RHEA:36899"/>
        <dbReference type="Rhea" id="RHEA-COMP:10145"/>
        <dbReference type="Rhea" id="RHEA-COMP:10147"/>
        <dbReference type="ChEBI" id="CHEBI:15378"/>
        <dbReference type="ChEBI" id="CHEBI:57856"/>
        <dbReference type="ChEBI" id="CHEBI:59789"/>
        <dbReference type="ChEBI" id="CHEBI:73542"/>
        <dbReference type="ChEBI" id="CHEBI:74269"/>
        <dbReference type="EC" id="2.1.1.228"/>
    </reaction>
</comment>
<comment type="subunit">
    <text evidence="1">Homodimer.</text>
</comment>
<comment type="subcellular location">
    <subcellularLocation>
        <location evidence="1">Cytoplasm</location>
    </subcellularLocation>
</comment>
<comment type="similarity">
    <text evidence="1">Belongs to the RNA methyltransferase TrmD family.</text>
</comment>
<keyword id="KW-0963">Cytoplasm</keyword>
<keyword id="KW-0489">Methyltransferase</keyword>
<keyword id="KW-1185">Reference proteome</keyword>
<keyword id="KW-0949">S-adenosyl-L-methionine</keyword>
<keyword id="KW-0808">Transferase</keyword>
<keyword id="KW-0819">tRNA processing</keyword>
<gene>
    <name evidence="1" type="primary">trmD</name>
    <name type="ordered locus">Swit_2662</name>
</gene>
<reference key="1">
    <citation type="journal article" date="2010" name="J. Bacteriol.">
        <title>Genome sequence of the dioxin-mineralizing bacterium Sphingomonas wittichii RW1.</title>
        <authorList>
            <person name="Miller T.R."/>
            <person name="Delcher A.L."/>
            <person name="Salzberg S.L."/>
            <person name="Saunders E."/>
            <person name="Detter J.C."/>
            <person name="Halden R.U."/>
        </authorList>
    </citation>
    <scope>NUCLEOTIDE SEQUENCE [LARGE SCALE GENOMIC DNA]</scope>
    <source>
        <strain>DSM 6014 / CCUG 31198 / JCM 15750 / NBRC 105917 / EY 4224 / RW1</strain>
    </source>
</reference>
<dbReference type="EC" id="2.1.1.228" evidence="1"/>
<dbReference type="EMBL" id="CP000699">
    <property type="protein sequence ID" value="ABQ69018.1"/>
    <property type="molecule type" value="Genomic_DNA"/>
</dbReference>
<dbReference type="SMR" id="A5V9Q2"/>
<dbReference type="STRING" id="392499.Swit_2662"/>
<dbReference type="PaxDb" id="392499-Swit_2662"/>
<dbReference type="KEGG" id="swi:Swit_2662"/>
<dbReference type="eggNOG" id="COG0336">
    <property type="taxonomic scope" value="Bacteria"/>
</dbReference>
<dbReference type="HOGENOM" id="CLU_047363_0_1_5"/>
<dbReference type="OrthoDB" id="9807416at2"/>
<dbReference type="Proteomes" id="UP000001989">
    <property type="component" value="Chromosome"/>
</dbReference>
<dbReference type="GO" id="GO:0005829">
    <property type="term" value="C:cytosol"/>
    <property type="evidence" value="ECO:0007669"/>
    <property type="project" value="TreeGrafter"/>
</dbReference>
<dbReference type="GO" id="GO:0052906">
    <property type="term" value="F:tRNA (guanine(37)-N1)-methyltransferase activity"/>
    <property type="evidence" value="ECO:0007669"/>
    <property type="project" value="UniProtKB-UniRule"/>
</dbReference>
<dbReference type="GO" id="GO:0002939">
    <property type="term" value="P:tRNA N1-guanine methylation"/>
    <property type="evidence" value="ECO:0007669"/>
    <property type="project" value="TreeGrafter"/>
</dbReference>
<dbReference type="CDD" id="cd18080">
    <property type="entry name" value="TrmD-like"/>
    <property type="match status" value="1"/>
</dbReference>
<dbReference type="Gene3D" id="3.40.1280.10">
    <property type="match status" value="1"/>
</dbReference>
<dbReference type="Gene3D" id="1.10.1270.20">
    <property type="entry name" value="tRNA(m1g37)methyltransferase, domain 2"/>
    <property type="match status" value="1"/>
</dbReference>
<dbReference type="HAMAP" id="MF_00605">
    <property type="entry name" value="TrmD"/>
    <property type="match status" value="1"/>
</dbReference>
<dbReference type="InterPro" id="IPR029028">
    <property type="entry name" value="Alpha/beta_knot_MTases"/>
</dbReference>
<dbReference type="InterPro" id="IPR023148">
    <property type="entry name" value="tRNA_m1G_MeTrfase_C_sf"/>
</dbReference>
<dbReference type="InterPro" id="IPR002649">
    <property type="entry name" value="tRNA_m1G_MeTrfase_TrmD"/>
</dbReference>
<dbReference type="InterPro" id="IPR029026">
    <property type="entry name" value="tRNA_m1G_MTases_N"/>
</dbReference>
<dbReference type="InterPro" id="IPR016009">
    <property type="entry name" value="tRNA_MeTrfase_TRMD/TRM10"/>
</dbReference>
<dbReference type="NCBIfam" id="NF000648">
    <property type="entry name" value="PRK00026.1"/>
    <property type="match status" value="1"/>
</dbReference>
<dbReference type="NCBIfam" id="TIGR00088">
    <property type="entry name" value="trmD"/>
    <property type="match status" value="1"/>
</dbReference>
<dbReference type="PANTHER" id="PTHR46417">
    <property type="entry name" value="TRNA (GUANINE-N(1)-)-METHYLTRANSFERASE"/>
    <property type="match status" value="1"/>
</dbReference>
<dbReference type="PANTHER" id="PTHR46417:SF1">
    <property type="entry name" value="TRNA (GUANINE-N(1)-)-METHYLTRANSFERASE"/>
    <property type="match status" value="1"/>
</dbReference>
<dbReference type="Pfam" id="PF01746">
    <property type="entry name" value="tRNA_m1G_MT"/>
    <property type="match status" value="1"/>
</dbReference>
<dbReference type="PIRSF" id="PIRSF000386">
    <property type="entry name" value="tRNA_mtase"/>
    <property type="match status" value="1"/>
</dbReference>
<dbReference type="SUPFAM" id="SSF75217">
    <property type="entry name" value="alpha/beta knot"/>
    <property type="match status" value="1"/>
</dbReference>
<accession>A5V9Q2</accession>
<protein>
    <recommendedName>
        <fullName evidence="1">tRNA (guanine-N(1)-)-methyltransferase</fullName>
        <ecNumber evidence="1">2.1.1.228</ecNumber>
    </recommendedName>
    <alternativeName>
        <fullName evidence="1">M1G-methyltransferase</fullName>
    </alternativeName>
    <alternativeName>
        <fullName evidence="1">tRNA [GM37] methyltransferase</fullName>
    </alternativeName>
</protein>